<keyword id="KW-0007">Acetylation</keyword>
<keyword id="KW-0117">Actin capping</keyword>
<keyword id="KW-0009">Actin-binding</keyword>
<keyword id="KW-0175">Coiled coil</keyword>
<keyword id="KW-0963">Cytoplasm</keyword>
<keyword id="KW-0206">Cytoskeleton</keyword>
<keyword id="KW-0597">Phosphoprotein</keyword>
<keyword id="KW-1185">Reference proteome</keyword>
<dbReference type="EMBL" id="CR861078">
    <property type="protein sequence ID" value="CAH93159.1"/>
    <property type="status" value="ALT_TERM"/>
    <property type="molecule type" value="mRNA"/>
</dbReference>
<dbReference type="RefSeq" id="NP_001127638.1">
    <property type="nucleotide sequence ID" value="NM_001134166.1"/>
</dbReference>
<dbReference type="BMRB" id="Q5R507"/>
<dbReference type="SMR" id="Q5R507"/>
<dbReference type="STRING" id="9601.ENSPPYP00000002072"/>
<dbReference type="Ensembl" id="ENSPPYT00000044471.1">
    <property type="protein sequence ID" value="ENSPPYP00000040573.1"/>
    <property type="gene ID" value="ENSPPYG00000001789.3"/>
</dbReference>
<dbReference type="GeneID" id="100174717"/>
<dbReference type="KEGG" id="pon:100174717"/>
<dbReference type="CTD" id="832"/>
<dbReference type="eggNOG" id="KOG3174">
    <property type="taxonomic scope" value="Eukaryota"/>
</dbReference>
<dbReference type="GeneTree" id="ENSGT00390000017957"/>
<dbReference type="InParanoid" id="Q5R507"/>
<dbReference type="OMA" id="WSNKYYP"/>
<dbReference type="OrthoDB" id="9979678at2759"/>
<dbReference type="Proteomes" id="UP000001595">
    <property type="component" value="Chromosome 1"/>
</dbReference>
<dbReference type="GO" id="GO:0008290">
    <property type="term" value="C:F-actin capping protein complex"/>
    <property type="evidence" value="ECO:0007669"/>
    <property type="project" value="InterPro"/>
</dbReference>
<dbReference type="GO" id="GO:0030017">
    <property type="term" value="C:sarcomere"/>
    <property type="evidence" value="ECO:0007669"/>
    <property type="project" value="UniProtKB-SubCell"/>
</dbReference>
<dbReference type="GO" id="GO:0071203">
    <property type="term" value="C:WASH complex"/>
    <property type="evidence" value="ECO:0000250"/>
    <property type="project" value="UniProtKB"/>
</dbReference>
<dbReference type="GO" id="GO:0003779">
    <property type="term" value="F:actin binding"/>
    <property type="evidence" value="ECO:0000250"/>
    <property type="project" value="UniProtKB"/>
</dbReference>
<dbReference type="GO" id="GO:0051015">
    <property type="term" value="F:actin filament binding"/>
    <property type="evidence" value="ECO:0007669"/>
    <property type="project" value="TreeGrafter"/>
</dbReference>
<dbReference type="GO" id="GO:0030036">
    <property type="term" value="P:actin cytoskeleton organization"/>
    <property type="evidence" value="ECO:0007669"/>
    <property type="project" value="InterPro"/>
</dbReference>
<dbReference type="GO" id="GO:0051016">
    <property type="term" value="P:barbed-end actin filament capping"/>
    <property type="evidence" value="ECO:0007669"/>
    <property type="project" value="InterPro"/>
</dbReference>
<dbReference type="GO" id="GO:0000902">
    <property type="term" value="P:cell morphogenesis"/>
    <property type="evidence" value="ECO:0007669"/>
    <property type="project" value="TreeGrafter"/>
</dbReference>
<dbReference type="GO" id="GO:0007010">
    <property type="term" value="P:cytoskeleton organization"/>
    <property type="evidence" value="ECO:0000250"/>
    <property type="project" value="UniProtKB"/>
</dbReference>
<dbReference type="GO" id="GO:0051490">
    <property type="term" value="P:negative regulation of filopodium assembly"/>
    <property type="evidence" value="ECO:0007669"/>
    <property type="project" value="TreeGrafter"/>
</dbReference>
<dbReference type="GO" id="GO:0022604">
    <property type="term" value="P:regulation of cell morphogenesis"/>
    <property type="evidence" value="ECO:0000250"/>
    <property type="project" value="UniProtKB"/>
</dbReference>
<dbReference type="GO" id="GO:0010591">
    <property type="term" value="P:regulation of lamellipodium assembly"/>
    <property type="evidence" value="ECO:0007669"/>
    <property type="project" value="TreeGrafter"/>
</dbReference>
<dbReference type="FunFam" id="1.20.58.570:FF:000001">
    <property type="entry name" value="F-actin-capping protein subunit beta"/>
    <property type="match status" value="1"/>
</dbReference>
<dbReference type="FunFam" id="3.90.1150.210:FF:000001">
    <property type="entry name" value="F-actin-capping protein subunit beta"/>
    <property type="match status" value="1"/>
</dbReference>
<dbReference type="Gene3D" id="1.20.58.570">
    <property type="match status" value="1"/>
</dbReference>
<dbReference type="Gene3D" id="3.90.1150.210">
    <property type="entry name" value="F-actin capping protein, beta subunit"/>
    <property type="match status" value="1"/>
</dbReference>
<dbReference type="InterPro" id="IPR037282">
    <property type="entry name" value="CapZ_alpha/beta"/>
</dbReference>
<dbReference type="InterPro" id="IPR042276">
    <property type="entry name" value="CapZ_alpha/beta_2"/>
</dbReference>
<dbReference type="InterPro" id="IPR001698">
    <property type="entry name" value="CAPZB"/>
</dbReference>
<dbReference type="InterPro" id="IPR043175">
    <property type="entry name" value="CAPZB_N"/>
</dbReference>
<dbReference type="InterPro" id="IPR019771">
    <property type="entry name" value="F-actin_capping_bsu_CS"/>
</dbReference>
<dbReference type="PANTHER" id="PTHR10619">
    <property type="entry name" value="F-ACTIN-CAPPING PROTEIN SUBUNIT BETA"/>
    <property type="match status" value="1"/>
</dbReference>
<dbReference type="PANTHER" id="PTHR10619:SF1">
    <property type="entry name" value="F-ACTIN-CAPPING PROTEIN SUBUNIT BETA"/>
    <property type="match status" value="1"/>
</dbReference>
<dbReference type="Pfam" id="PF01115">
    <property type="entry name" value="F_actin_cap_B"/>
    <property type="match status" value="1"/>
</dbReference>
<dbReference type="PRINTS" id="PR00192">
    <property type="entry name" value="FACTINCAPB"/>
</dbReference>
<dbReference type="SUPFAM" id="SSF90096">
    <property type="entry name" value="Subunits of heterodimeric actin filament capping protein Capz"/>
    <property type="match status" value="1"/>
</dbReference>
<dbReference type="PROSITE" id="PS00231">
    <property type="entry name" value="F_ACTIN_CAPPING_BETA"/>
    <property type="match status" value="1"/>
</dbReference>
<accession>Q5R507</accession>
<feature type="initiator methionine" description="Removed" evidence="2">
    <location>
        <position position="1"/>
    </location>
</feature>
<feature type="chain" id="PRO_0000289719" description="F-actin-capping protein subunit beta">
    <location>
        <begin position="2"/>
        <end position="272"/>
    </location>
</feature>
<feature type="coiled-coil region" evidence="3">
    <location>
        <begin position="210"/>
        <end position="272"/>
    </location>
</feature>
<feature type="modified residue" description="N-acetylserine" evidence="2">
    <location>
        <position position="2"/>
    </location>
</feature>
<feature type="modified residue" description="Phosphoserine" evidence="2">
    <location>
        <position position="2"/>
    </location>
</feature>
<feature type="modified residue" description="N6-acetyllysine" evidence="2">
    <location>
        <position position="235"/>
    </location>
</feature>
<name>CAPZB_PONAB</name>
<gene>
    <name type="primary">CAPZB</name>
</gene>
<proteinExistence type="evidence at transcript level"/>
<protein>
    <recommendedName>
        <fullName>F-actin-capping protein subunit beta</fullName>
    </recommendedName>
    <alternativeName>
        <fullName>CapZ beta</fullName>
    </alternativeName>
</protein>
<evidence type="ECO:0000250" key="1">
    <source>
        <dbReference type="UniProtKB" id="A9XFX6"/>
    </source>
</evidence>
<evidence type="ECO:0000250" key="2">
    <source>
        <dbReference type="UniProtKB" id="P47756"/>
    </source>
</evidence>
<evidence type="ECO:0000255" key="3"/>
<evidence type="ECO:0000305" key="4"/>
<comment type="function">
    <text evidence="1 2">F-actin-capping proteins bind in a Ca(2+)-independent manner to the fast growing ends of actin filaments (barbed end) thereby blocking the exchange of subunits at these ends. Unlike other capping proteins (such as gelsolin and severin), these proteins do not sever actin filaments. Plays a role in the regulation of cell morphology and cytoskeletal organization (By similarity). Forms, with CAPZB, the barbed end of the fast growing ends of actin filaments in the dynactin complex and stabilizes dynactin structure. The dynactin multiprotein complex activates the molecular motor dynein for ultra-processive transport along microtubules (By similarity).</text>
</comment>
<comment type="subunit">
    <text evidence="1 2">Component of the F-actin capping complex, composed of a heterodimer of an alpha and a beta subunit. Subunit of dynactin, a multiprotein complex part of a tripartite complex with dynein and a adapter, such as BICDL1, BICD2 or HOOK3. The dynactin complex is built around ACTR1A/ACTB filament and consists of an actin-related filament composed of a shoulder domain, a pointed end and a barbed end. Its length is defined by its flexible shoulder domain. The soulder is composed of 2 DCTN1 subunits, 4 DCTN2 and 2 DCTN3. The 4 DCNT2 (via N-terminus) bind the ACTR1A filament and act as molecular rulers to determine the length. The pointed end is important for binding dynein-dynactin cargo adapters. Consists of 4 subunits: ACTR10, DCNT4, DCTN5 and DCTN6. The barbed end is composed of a CAPZA1:CAPZB heterodimers, which binds ACTR1A/ACTB filament and dynactin and stabilizes dynactin (By similarity). Interacts with ARHGAP17. Interaction with RCSD1/CAPZIP. Component of the WASH complex, composed of F-actin-capping protein subunit alpha (CAPZA1, CAPZA2 or CAPZA3), F-actin-capping protein subunit beta (CAPZB), WASH (WASHC1, WASH2P, WASH3P, WASH4P, WASH5P or WASH6P), WASHC2 (WASHC2A or WASHC2C), WASHC3, WASHC4 and WASHC5. Interacts with ACTG1. Directly interacts with CRACD; this interaction decreases binding to actin (By similarity).</text>
</comment>
<comment type="subcellular location">
    <subcellularLocation>
        <location evidence="1">Cytoplasm</location>
        <location evidence="1">Cytoskeleton</location>
    </subcellularLocation>
    <subcellularLocation>
        <location evidence="1">Cytoplasm</location>
        <location evidence="1">Myofibril</location>
        <location evidence="1">Sarcomere</location>
    </subcellularLocation>
</comment>
<comment type="similarity">
    <text evidence="4">Belongs to the F-actin-capping protein beta subunit family.</text>
</comment>
<reference key="1">
    <citation type="submission" date="2004-11" db="EMBL/GenBank/DDBJ databases">
        <authorList>
            <consortium name="The German cDNA consortium"/>
        </authorList>
    </citation>
    <scope>NUCLEOTIDE SEQUENCE [LARGE SCALE MRNA]</scope>
    <source>
        <tissue>Brain cortex</tissue>
    </source>
</reference>
<sequence length="272" mass="30629">MSDQQLDCALDLMRRLPPQQIEKNLSDLIDLVPSLCEDLLSSVDQPLKIARDKVVGKDYLLCDYNRDGDSYRSPWSNKYDPPLEDGAMPSARLRKLEVEANNAFDQYRDLYFEGGVSSVYLWDLDHGFAGVILIKKAGDGSKKIKGCWDSIHVVEVQEKSSGRTAHYKLTSTVMLWLQTNKSGSGTMNLGGSLTRQMEKDETVSDCSPHIANIGRLVEDMENKIRSTLNEIYFGKTKDIVNGLRSVQTFADKSKQEALKNDLVEALKRKQQC</sequence>
<organism>
    <name type="scientific">Pongo abelii</name>
    <name type="common">Sumatran orangutan</name>
    <name type="synonym">Pongo pygmaeus abelii</name>
    <dbReference type="NCBI Taxonomy" id="9601"/>
    <lineage>
        <taxon>Eukaryota</taxon>
        <taxon>Metazoa</taxon>
        <taxon>Chordata</taxon>
        <taxon>Craniata</taxon>
        <taxon>Vertebrata</taxon>
        <taxon>Euteleostomi</taxon>
        <taxon>Mammalia</taxon>
        <taxon>Eutheria</taxon>
        <taxon>Euarchontoglires</taxon>
        <taxon>Primates</taxon>
        <taxon>Haplorrhini</taxon>
        <taxon>Catarrhini</taxon>
        <taxon>Hominidae</taxon>
        <taxon>Pongo</taxon>
    </lineage>
</organism>